<evidence type="ECO:0000250" key="1"/>
<evidence type="ECO:0000255" key="2">
    <source>
        <dbReference type="PROSITE-ProRule" id="PRU00159"/>
    </source>
</evidence>
<evidence type="ECO:0000255" key="3">
    <source>
        <dbReference type="PROSITE-ProRule" id="PRU10027"/>
    </source>
</evidence>
<evidence type="ECO:0000256" key="4">
    <source>
        <dbReference type="SAM" id="MobiDB-lite"/>
    </source>
</evidence>
<evidence type="ECO:0000269" key="5">
    <source>
    </source>
</evidence>
<evidence type="ECO:0000305" key="6"/>
<reference key="1">
    <citation type="journal article" date="2000" name="Biochem. J.">
        <title>Isolation and characterization of casein kinase I from Dictyostelium discoideum.</title>
        <authorList>
            <person name="Moreno-Bueno G."/>
            <person name="Cales C."/>
            <person name="Behrens M.M."/>
            <person name="Fernandez-Renart M."/>
        </authorList>
    </citation>
    <scope>NUCLEOTIDE SEQUENCE [MRNA]</scope>
    <scope>AUTOPHOSPHORYLATION</scope>
    <scope>FUNCTION</scope>
    <scope>SUBCELLULAR LOCATION</scope>
    <scope>DEVELOPMENTAL STAGE</scope>
    <scope>MUTAGENESIS OF LYS-38</scope>
    <source>
        <strain>AX2</strain>
    </source>
</reference>
<reference key="2">
    <citation type="journal article" date="2002" name="Nature">
        <title>Sequence and analysis of chromosome 2 of Dictyostelium discoideum.</title>
        <authorList>
            <person name="Gloeckner G."/>
            <person name="Eichinger L."/>
            <person name="Szafranski K."/>
            <person name="Pachebat J.A."/>
            <person name="Bankier A.T."/>
            <person name="Dear P.H."/>
            <person name="Lehmann R."/>
            <person name="Baumgart C."/>
            <person name="Parra G."/>
            <person name="Abril J.F."/>
            <person name="Guigo R."/>
            <person name="Kumpf K."/>
            <person name="Tunggal B."/>
            <person name="Cox E.C."/>
            <person name="Quail M.A."/>
            <person name="Platzer M."/>
            <person name="Rosenthal A."/>
            <person name="Noegel A.A."/>
        </authorList>
    </citation>
    <scope>NUCLEOTIDE SEQUENCE [LARGE SCALE GENOMIC DNA]</scope>
    <source>
        <strain>AX4</strain>
    </source>
</reference>
<reference key="3">
    <citation type="journal article" date="2005" name="Nature">
        <title>The genome of the social amoeba Dictyostelium discoideum.</title>
        <authorList>
            <person name="Eichinger L."/>
            <person name="Pachebat J.A."/>
            <person name="Gloeckner G."/>
            <person name="Rajandream M.A."/>
            <person name="Sucgang R."/>
            <person name="Berriman M."/>
            <person name="Song J."/>
            <person name="Olsen R."/>
            <person name="Szafranski K."/>
            <person name="Xu Q."/>
            <person name="Tunggal B."/>
            <person name="Kummerfeld S."/>
            <person name="Madera M."/>
            <person name="Konfortov B.A."/>
            <person name="Rivero F."/>
            <person name="Bankier A.T."/>
            <person name="Lehmann R."/>
            <person name="Hamlin N."/>
            <person name="Davies R."/>
            <person name="Gaudet P."/>
            <person name="Fey P."/>
            <person name="Pilcher K."/>
            <person name="Chen G."/>
            <person name="Saunders D."/>
            <person name="Sodergren E.J."/>
            <person name="Davis P."/>
            <person name="Kerhornou A."/>
            <person name="Nie X."/>
            <person name="Hall N."/>
            <person name="Anjard C."/>
            <person name="Hemphill L."/>
            <person name="Bason N."/>
            <person name="Farbrother P."/>
            <person name="Desany B."/>
            <person name="Just E."/>
            <person name="Morio T."/>
            <person name="Rost R."/>
            <person name="Churcher C.M."/>
            <person name="Cooper J."/>
            <person name="Haydock S."/>
            <person name="van Driessche N."/>
            <person name="Cronin A."/>
            <person name="Goodhead I."/>
            <person name="Muzny D.M."/>
            <person name="Mourier T."/>
            <person name="Pain A."/>
            <person name="Lu M."/>
            <person name="Harper D."/>
            <person name="Lindsay R."/>
            <person name="Hauser H."/>
            <person name="James K.D."/>
            <person name="Quiles M."/>
            <person name="Madan Babu M."/>
            <person name="Saito T."/>
            <person name="Buchrieser C."/>
            <person name="Wardroper A."/>
            <person name="Felder M."/>
            <person name="Thangavelu M."/>
            <person name="Johnson D."/>
            <person name="Knights A."/>
            <person name="Loulseged H."/>
            <person name="Mungall K.L."/>
            <person name="Oliver K."/>
            <person name="Price C."/>
            <person name="Quail M.A."/>
            <person name="Urushihara H."/>
            <person name="Hernandez J."/>
            <person name="Rabbinowitsch E."/>
            <person name="Steffen D."/>
            <person name="Sanders M."/>
            <person name="Ma J."/>
            <person name="Kohara Y."/>
            <person name="Sharp S."/>
            <person name="Simmonds M.N."/>
            <person name="Spiegler S."/>
            <person name="Tivey A."/>
            <person name="Sugano S."/>
            <person name="White B."/>
            <person name="Walker D."/>
            <person name="Woodward J.R."/>
            <person name="Winckler T."/>
            <person name="Tanaka Y."/>
            <person name="Shaulsky G."/>
            <person name="Schleicher M."/>
            <person name="Weinstock G.M."/>
            <person name="Rosenthal A."/>
            <person name="Cox E.C."/>
            <person name="Chisholm R.L."/>
            <person name="Gibbs R.A."/>
            <person name="Loomis W.F."/>
            <person name="Platzer M."/>
            <person name="Kay R.R."/>
            <person name="Williams J.G."/>
            <person name="Dear P.H."/>
            <person name="Noegel A.A."/>
            <person name="Barrell B.G."/>
            <person name="Kuspa A."/>
        </authorList>
    </citation>
    <scope>NUCLEOTIDE SEQUENCE [LARGE SCALE GENOMIC DNA]</scope>
    <source>
        <strain>AX4</strain>
    </source>
</reference>
<reference key="4">
    <citation type="journal article" date="2004" name="Int. Rev. Cytol.">
        <title>Molecular and functional analysis of the dictyostelium centrosome.</title>
        <authorList>
            <person name="Graef R."/>
            <person name="Daunderer C."/>
            <person name="Schulz I."/>
        </authorList>
    </citation>
    <scope>SUBCELLULAR LOCATION</scope>
</reference>
<gene>
    <name type="primary">cak1-1</name>
    <name type="ORF">DDB_G0273059</name>
</gene>
<gene>
    <name type="primary">cak1-2</name>
    <name type="ORF">DDB_G0273737</name>
</gene>
<comment type="function">
    <text evidence="5">Casein kinases are operationally defined by their preferential utilization of acidic proteins such as caseins as substrates. Can phosphorylate a large number of proteins. May have a role in DNA repair mechanism and support vegetative growth of the cells.</text>
</comment>
<comment type="catalytic activity">
    <reaction>
        <text>L-seryl-[protein] + ATP = O-phospho-L-seryl-[protein] + ADP + H(+)</text>
        <dbReference type="Rhea" id="RHEA:17989"/>
        <dbReference type="Rhea" id="RHEA-COMP:9863"/>
        <dbReference type="Rhea" id="RHEA-COMP:11604"/>
        <dbReference type="ChEBI" id="CHEBI:15378"/>
        <dbReference type="ChEBI" id="CHEBI:29999"/>
        <dbReference type="ChEBI" id="CHEBI:30616"/>
        <dbReference type="ChEBI" id="CHEBI:83421"/>
        <dbReference type="ChEBI" id="CHEBI:456216"/>
        <dbReference type="EC" id="2.7.11.1"/>
    </reaction>
</comment>
<comment type="catalytic activity">
    <reaction>
        <text>L-threonyl-[protein] + ATP = O-phospho-L-threonyl-[protein] + ADP + H(+)</text>
        <dbReference type="Rhea" id="RHEA:46608"/>
        <dbReference type="Rhea" id="RHEA-COMP:11060"/>
        <dbReference type="Rhea" id="RHEA-COMP:11605"/>
        <dbReference type="ChEBI" id="CHEBI:15378"/>
        <dbReference type="ChEBI" id="CHEBI:30013"/>
        <dbReference type="ChEBI" id="CHEBI:30616"/>
        <dbReference type="ChEBI" id="CHEBI:61977"/>
        <dbReference type="ChEBI" id="CHEBI:456216"/>
        <dbReference type="EC" id="2.7.11.1"/>
    </reaction>
</comment>
<comment type="subunit">
    <text evidence="1">Monomer.</text>
</comment>
<comment type="subcellular location">
    <subcellularLocation>
        <location>Cytoplasm</location>
    </subcellularLocation>
    <subcellularLocation>
        <location>Nucleus</location>
    </subcellularLocation>
</comment>
<comment type="developmental stage">
    <text evidence="5">Present in vegetative cells.</text>
</comment>
<comment type="PTM">
    <text>Autophosphorylated.</text>
</comment>
<comment type="similarity">
    <text evidence="6">Belongs to the protein kinase superfamily. CK1 Ser/Thr protein kinase family. Casein kinase I subfamily.</text>
</comment>
<comment type="caution">
    <text evidence="6">The gene for this protein is duplicated in strains AX3 and AX4. These strains contain a duplication of a segment of 750 kb of chromosome 2 compared to the corresponding sequence in strain AX2.</text>
</comment>
<feature type="chain" id="PRO_0000352351" description="Casein kinase I">
    <location>
        <begin position="1"/>
        <end position="426"/>
    </location>
</feature>
<feature type="domain" description="Protein kinase" evidence="2">
    <location>
        <begin position="9"/>
        <end position="278"/>
    </location>
</feature>
<feature type="region of interest" description="Disordered" evidence="4">
    <location>
        <begin position="340"/>
        <end position="360"/>
    </location>
</feature>
<feature type="region of interest" description="Disordered" evidence="4">
    <location>
        <begin position="377"/>
        <end position="426"/>
    </location>
</feature>
<feature type="compositionally biased region" description="Polar residues" evidence="4">
    <location>
        <begin position="345"/>
        <end position="360"/>
    </location>
</feature>
<feature type="compositionally biased region" description="Low complexity" evidence="4">
    <location>
        <begin position="386"/>
        <end position="404"/>
    </location>
</feature>
<feature type="compositionally biased region" description="Polar residues" evidence="4">
    <location>
        <begin position="414"/>
        <end position="426"/>
    </location>
</feature>
<feature type="active site" description="Proton acceptor" evidence="2 3">
    <location>
        <position position="128"/>
    </location>
</feature>
<feature type="binding site" evidence="2">
    <location>
        <begin position="15"/>
        <end position="23"/>
    </location>
    <ligand>
        <name>ATP</name>
        <dbReference type="ChEBI" id="CHEBI:30616"/>
    </ligand>
</feature>
<feature type="binding site" evidence="6">
    <location>
        <position position="38"/>
    </location>
    <ligand>
        <name>ATP</name>
        <dbReference type="ChEBI" id="CHEBI:30616"/>
    </ligand>
</feature>
<feature type="mutagenesis site" description="Abolishes growth." evidence="5">
    <original>K</original>
    <variation>R</variation>
    <location>
        <position position="38"/>
    </location>
</feature>
<feature type="sequence conflict" description="In Ref. 1; AAD01192." evidence="6" ref="1">
    <original>Y</original>
    <variation>L</variation>
    <location>
        <position position="201"/>
    </location>
</feature>
<accession>Q556Y4</accession>
<accession>O96300</accession>
<accession>Q86AI9</accession>
<protein>
    <recommendedName>
        <fullName>Casein kinase I</fullName>
        <shortName>CK1</shortName>
        <shortName>DdCK1</shortName>
        <ecNumber>2.7.11.1</ecNumber>
    </recommendedName>
</protein>
<name>KC1_DICDI</name>
<organism>
    <name type="scientific">Dictyostelium discoideum</name>
    <name type="common">Social amoeba</name>
    <dbReference type="NCBI Taxonomy" id="44689"/>
    <lineage>
        <taxon>Eukaryota</taxon>
        <taxon>Amoebozoa</taxon>
        <taxon>Evosea</taxon>
        <taxon>Eumycetozoa</taxon>
        <taxon>Dictyostelia</taxon>
        <taxon>Dictyosteliales</taxon>
        <taxon>Dictyosteliaceae</taxon>
        <taxon>Dictyostelium</taxon>
    </lineage>
</organism>
<dbReference type="EC" id="2.7.11.1"/>
<dbReference type="EMBL" id="AF003547">
    <property type="protein sequence ID" value="AAD01192.1"/>
    <property type="molecule type" value="mRNA"/>
</dbReference>
<dbReference type="EMBL" id="AAFI02000009">
    <property type="protein sequence ID" value="EAL70747.1"/>
    <property type="molecule type" value="Genomic_DNA"/>
</dbReference>
<dbReference type="EMBL" id="AAFI02000011">
    <property type="protein sequence ID" value="EAL70559.1"/>
    <property type="molecule type" value="Genomic_DNA"/>
</dbReference>
<dbReference type="RefSeq" id="XP_644485.1">
    <property type="nucleotide sequence ID" value="XM_639393.1"/>
</dbReference>
<dbReference type="RefSeq" id="XP_644765.1">
    <property type="nucleotide sequence ID" value="XM_639673.1"/>
</dbReference>
<dbReference type="SMR" id="Q556Y4"/>
<dbReference type="FunCoup" id="Q556Y4">
    <property type="interactions" value="953"/>
</dbReference>
<dbReference type="STRING" id="44689.Q556Y4"/>
<dbReference type="PaxDb" id="44689-DDB0185182"/>
<dbReference type="EnsemblProtists" id="EAL70559">
    <property type="protein sequence ID" value="EAL70559"/>
    <property type="gene ID" value="DDB_G0273737"/>
</dbReference>
<dbReference type="EnsemblProtists" id="EAL70747">
    <property type="protein sequence ID" value="EAL70747"/>
    <property type="gene ID" value="DDB_G0273059"/>
</dbReference>
<dbReference type="GeneID" id="8618867"/>
<dbReference type="GeneID" id="8619109"/>
<dbReference type="KEGG" id="ddi:DDB_G0273059"/>
<dbReference type="KEGG" id="ddi:DDB_G0273737"/>
<dbReference type="dictyBase" id="DDB_G0273059">
    <property type="gene designation" value="cak1-1"/>
</dbReference>
<dbReference type="dictyBase" id="DDB_G0273737">
    <property type="gene designation" value="cak1-2"/>
</dbReference>
<dbReference type="VEuPathDB" id="AmoebaDB:DDB_G0273737"/>
<dbReference type="eggNOG" id="KOG1164">
    <property type="taxonomic scope" value="Eukaryota"/>
</dbReference>
<dbReference type="HOGENOM" id="CLU_019279_2_7_1"/>
<dbReference type="InParanoid" id="Q556Y4"/>
<dbReference type="OMA" id="IFDWTFL"/>
<dbReference type="PhylomeDB" id="Q556Y4"/>
<dbReference type="Reactome" id="R-DDI-204005">
    <property type="pathway name" value="COPII-mediated vesicle transport"/>
</dbReference>
<dbReference type="PRO" id="PR:Q556Y4"/>
<dbReference type="Proteomes" id="UP000002195">
    <property type="component" value="Chromosome 2"/>
</dbReference>
<dbReference type="GO" id="GO:0005813">
    <property type="term" value="C:centrosome"/>
    <property type="evidence" value="ECO:0000304"/>
    <property type="project" value="dictyBase"/>
</dbReference>
<dbReference type="GO" id="GO:0005737">
    <property type="term" value="C:cytoplasm"/>
    <property type="evidence" value="ECO:0000314"/>
    <property type="project" value="dictyBase"/>
</dbReference>
<dbReference type="GO" id="GO:0005634">
    <property type="term" value="C:nucleus"/>
    <property type="evidence" value="ECO:0000314"/>
    <property type="project" value="dictyBase"/>
</dbReference>
<dbReference type="GO" id="GO:0005524">
    <property type="term" value="F:ATP binding"/>
    <property type="evidence" value="ECO:0007669"/>
    <property type="project" value="UniProtKB-KW"/>
</dbReference>
<dbReference type="GO" id="GO:0106310">
    <property type="term" value="F:protein serine kinase activity"/>
    <property type="evidence" value="ECO:0007669"/>
    <property type="project" value="RHEA"/>
</dbReference>
<dbReference type="GO" id="GO:0004674">
    <property type="term" value="F:protein serine/threonine kinase activity"/>
    <property type="evidence" value="ECO:0000314"/>
    <property type="project" value="dictyBase"/>
</dbReference>
<dbReference type="GO" id="GO:0006281">
    <property type="term" value="P:DNA repair"/>
    <property type="evidence" value="ECO:0000315"/>
    <property type="project" value="dictyBase"/>
</dbReference>
<dbReference type="GO" id="GO:0006897">
    <property type="term" value="P:endocytosis"/>
    <property type="evidence" value="ECO:0000318"/>
    <property type="project" value="GO_Central"/>
</dbReference>
<dbReference type="GO" id="GO:0007165">
    <property type="term" value="P:signal transduction"/>
    <property type="evidence" value="ECO:0000318"/>
    <property type="project" value="GO_Central"/>
</dbReference>
<dbReference type="CDD" id="cd14125">
    <property type="entry name" value="STKc_CK1_delta_epsilon"/>
    <property type="match status" value="1"/>
</dbReference>
<dbReference type="FunFam" id="1.10.510.10:FF:000635">
    <property type="entry name" value="Casein kinase I"/>
    <property type="match status" value="1"/>
</dbReference>
<dbReference type="FunFam" id="3.30.200.20:FF:000538">
    <property type="entry name" value="Putative Casein kinase I"/>
    <property type="match status" value="1"/>
</dbReference>
<dbReference type="Gene3D" id="1.10.510.10">
    <property type="entry name" value="Transferase(Phosphotransferase) domain 1"/>
    <property type="match status" value="1"/>
</dbReference>
<dbReference type="InterPro" id="IPR050235">
    <property type="entry name" value="CK1_Ser-Thr_kinase"/>
</dbReference>
<dbReference type="InterPro" id="IPR011009">
    <property type="entry name" value="Kinase-like_dom_sf"/>
</dbReference>
<dbReference type="InterPro" id="IPR000719">
    <property type="entry name" value="Prot_kinase_dom"/>
</dbReference>
<dbReference type="InterPro" id="IPR017441">
    <property type="entry name" value="Protein_kinase_ATP_BS"/>
</dbReference>
<dbReference type="InterPro" id="IPR008271">
    <property type="entry name" value="Ser/Thr_kinase_AS"/>
</dbReference>
<dbReference type="PANTHER" id="PTHR11909">
    <property type="entry name" value="CASEIN KINASE-RELATED"/>
    <property type="match status" value="1"/>
</dbReference>
<dbReference type="Pfam" id="PF00069">
    <property type="entry name" value="Pkinase"/>
    <property type="match status" value="1"/>
</dbReference>
<dbReference type="SMART" id="SM00220">
    <property type="entry name" value="S_TKc"/>
    <property type="match status" value="1"/>
</dbReference>
<dbReference type="SUPFAM" id="SSF56112">
    <property type="entry name" value="Protein kinase-like (PK-like)"/>
    <property type="match status" value="1"/>
</dbReference>
<dbReference type="PROSITE" id="PS00107">
    <property type="entry name" value="PROTEIN_KINASE_ATP"/>
    <property type="match status" value="1"/>
</dbReference>
<dbReference type="PROSITE" id="PS50011">
    <property type="entry name" value="PROTEIN_KINASE_DOM"/>
    <property type="match status" value="1"/>
</dbReference>
<dbReference type="PROSITE" id="PS00108">
    <property type="entry name" value="PROTEIN_KINASE_ST"/>
    <property type="match status" value="1"/>
</dbReference>
<proteinExistence type="evidence at protein level"/>
<sequence>MDLRIGGKYRISRKIGGGSFGEIYLGTNISTNEEVAIKLEPAKAIHPQLLFESKLYKIFQGGIGIPAVKWFGFDGDYNIMVMDLLGPSLEDLFNYCGRKFSLKTVLMLGDQMLRRIEFIHSNNFIHRDIKPDNFLMGIGKRGHVVNLIDFGLAKRYRDPKTHQHIPYREHKNLTGTARYASLNTHQGIEQSRRDDLESLGYVLMYFNRGSLPWQGLKAYTKRDKYEKICDKKAQTKIDTLCQGFPSEFATFLNYTRFLKFEDKPDFLYLRKLLREMFVREGYRYDYMFDWVIVRKLREKPPLERPLSNDNKQIQQQIQQQQQAQQQLQQQAQQQQQQTTTTTTTSSSQPSNVKNISTVSNIATTTTDEQFRQLLSTPSYNNVDSDQSPQQTTTTTSSSNPNQTTFYRQNKVVVPQSSSTTTKPPAK</sequence>
<keyword id="KW-0067">ATP-binding</keyword>
<keyword id="KW-0963">Cytoplasm</keyword>
<keyword id="KW-0418">Kinase</keyword>
<keyword id="KW-0547">Nucleotide-binding</keyword>
<keyword id="KW-0539">Nucleus</keyword>
<keyword id="KW-0597">Phosphoprotein</keyword>
<keyword id="KW-1185">Reference proteome</keyword>
<keyword id="KW-0723">Serine/threonine-protein kinase</keyword>
<keyword id="KW-0808">Transferase</keyword>